<gene>
    <name type="ordered locus">SERP0390</name>
</gene>
<name>Y390_STAEQ</name>
<reference key="1">
    <citation type="journal article" date="2005" name="J. Bacteriol.">
        <title>Insights on evolution of virulence and resistance from the complete genome analysis of an early methicillin-resistant Staphylococcus aureus strain and a biofilm-producing methicillin-resistant Staphylococcus epidermidis strain.</title>
        <authorList>
            <person name="Gill S.R."/>
            <person name="Fouts D.E."/>
            <person name="Archer G.L."/>
            <person name="Mongodin E.F."/>
            <person name="DeBoy R.T."/>
            <person name="Ravel J."/>
            <person name="Paulsen I.T."/>
            <person name="Kolonay J.F."/>
            <person name="Brinkac L.M."/>
            <person name="Beanan M.J."/>
            <person name="Dodson R.J."/>
            <person name="Daugherty S.C."/>
            <person name="Madupu R."/>
            <person name="Angiuoli S.V."/>
            <person name="Durkin A.S."/>
            <person name="Haft D.H."/>
            <person name="Vamathevan J.J."/>
            <person name="Khouri H."/>
            <person name="Utterback T.R."/>
            <person name="Lee C."/>
            <person name="Dimitrov G."/>
            <person name="Jiang L."/>
            <person name="Qin H."/>
            <person name="Weidman J."/>
            <person name="Tran K."/>
            <person name="Kang K.H."/>
            <person name="Hance I.R."/>
            <person name="Nelson K.E."/>
            <person name="Fraser C.M."/>
        </authorList>
    </citation>
    <scope>NUCLEOTIDE SEQUENCE [LARGE SCALE GENOMIC DNA]</scope>
    <source>
        <strain>ATCC 35984 / DSM 28319 / BCRC 17069 / CCUG 31568 / BM 3577 / RP62A</strain>
    </source>
</reference>
<evidence type="ECO:0000250" key="1"/>
<evidence type="ECO:0000255" key="2">
    <source>
        <dbReference type="PROSITE-ProRule" id="PRU00783"/>
    </source>
</evidence>
<evidence type="ECO:0000305" key="3"/>
<feature type="chain" id="PRO_0000386519" description="Putative lipid kinase SERP0390">
    <location>
        <begin position="1"/>
        <end position="307"/>
    </location>
</feature>
<feature type="domain" description="DAGKc" evidence="2">
    <location>
        <begin position="3"/>
        <end position="139"/>
    </location>
</feature>
<feature type="active site" description="Proton acceptor" evidence="1">
    <location>
        <position position="281"/>
    </location>
</feature>
<feature type="binding site" evidence="2">
    <location>
        <position position="44"/>
    </location>
    <ligand>
        <name>ATP</name>
        <dbReference type="ChEBI" id="CHEBI:30616"/>
    </ligand>
</feature>
<feature type="binding site" evidence="2">
    <location>
        <begin position="74"/>
        <end position="80"/>
    </location>
    <ligand>
        <name>ATP</name>
        <dbReference type="ChEBI" id="CHEBI:30616"/>
    </ligand>
</feature>
<feature type="binding site" evidence="2">
    <location>
        <position position="101"/>
    </location>
    <ligand>
        <name>ATP</name>
        <dbReference type="ChEBI" id="CHEBI:30616"/>
    </ligand>
</feature>
<feature type="binding site" evidence="1">
    <location>
        <position position="220"/>
    </location>
    <ligand>
        <name>Mg(2+)</name>
        <dbReference type="ChEBI" id="CHEBI:18420"/>
    </ligand>
</feature>
<feature type="binding site" evidence="1">
    <location>
        <position position="223"/>
    </location>
    <ligand>
        <name>Mg(2+)</name>
        <dbReference type="ChEBI" id="CHEBI:18420"/>
    </ligand>
</feature>
<feature type="binding site" evidence="1">
    <location>
        <position position="225"/>
    </location>
    <ligand>
        <name>Mg(2+)</name>
        <dbReference type="ChEBI" id="CHEBI:18420"/>
    </ligand>
</feature>
<sequence length="307" mass="33782">MKQPYNHGVLFYHEHSGLKDIHNGIGEVAKSLSSMCKHLSLQLSENKGDIIKYCKSIKNENYSSDVDVLFILGGDGTLNELVNGVMQYQLNLPIGVIPGGTFNDFTKTLQLHPNFKTASEQLLTSHAESYDVLKVNDLYVLNFVGLGLIVQNAENVQDGSKDIFGKFSYIGSTVKTLLNPVKFDFSLTVDGETKEGNTSMMLIANGPNIGGGQIPLTDLSPQDGRANTFVFNDQTLNILNDILKKRDSMNWNEITQGIDHISGKHITLSTNPSMKVDIDGEINLETPIEIQVLPKAIQLLTATEQNN</sequence>
<keyword id="KW-0067">ATP-binding</keyword>
<keyword id="KW-0418">Kinase</keyword>
<keyword id="KW-0444">Lipid biosynthesis</keyword>
<keyword id="KW-0443">Lipid metabolism</keyword>
<keyword id="KW-0460">Magnesium</keyword>
<keyword id="KW-0479">Metal-binding</keyword>
<keyword id="KW-0547">Nucleotide-binding</keyword>
<keyword id="KW-0594">Phospholipid biosynthesis</keyword>
<keyword id="KW-1208">Phospholipid metabolism</keyword>
<keyword id="KW-1185">Reference proteome</keyword>
<keyword id="KW-0808">Transferase</keyword>
<comment type="function">
    <text evidence="1">May catalyze the ATP-dependent phosphorylation of lipids other than diacylglycerol (DAG).</text>
</comment>
<comment type="cofactor">
    <cofactor evidence="1">
        <name>Mg(2+)</name>
        <dbReference type="ChEBI" id="CHEBI:18420"/>
    </cofactor>
    <text evidence="1">Binds 1 Mg(2+) ion per subunit. This ion appears to have a structural role and is required for catalytic activity.</text>
</comment>
<comment type="similarity">
    <text evidence="3">Belongs to the diacylglycerol/lipid kinase family.</text>
</comment>
<dbReference type="EC" id="2.7.1.-"/>
<dbReference type="EMBL" id="CP000029">
    <property type="protein sequence ID" value="AAW53771.1"/>
    <property type="molecule type" value="Genomic_DNA"/>
</dbReference>
<dbReference type="RefSeq" id="WP_001829680.1">
    <property type="nucleotide sequence ID" value="NC_002976.3"/>
</dbReference>
<dbReference type="SMR" id="Q5HR05"/>
<dbReference type="STRING" id="176279.SERP0390"/>
<dbReference type="KEGG" id="ser:SERP0390"/>
<dbReference type="eggNOG" id="COG1597">
    <property type="taxonomic scope" value="Bacteria"/>
</dbReference>
<dbReference type="HOGENOM" id="CLU_045532_1_0_9"/>
<dbReference type="Proteomes" id="UP000000531">
    <property type="component" value="Chromosome"/>
</dbReference>
<dbReference type="GO" id="GO:0005886">
    <property type="term" value="C:plasma membrane"/>
    <property type="evidence" value="ECO:0007669"/>
    <property type="project" value="TreeGrafter"/>
</dbReference>
<dbReference type="GO" id="GO:0005524">
    <property type="term" value="F:ATP binding"/>
    <property type="evidence" value="ECO:0007669"/>
    <property type="project" value="UniProtKB-KW"/>
</dbReference>
<dbReference type="GO" id="GO:0004143">
    <property type="term" value="F:ATP-dependent diacylglycerol kinase activity"/>
    <property type="evidence" value="ECO:0007669"/>
    <property type="project" value="TreeGrafter"/>
</dbReference>
<dbReference type="GO" id="GO:0046872">
    <property type="term" value="F:metal ion binding"/>
    <property type="evidence" value="ECO:0007669"/>
    <property type="project" value="UniProtKB-KW"/>
</dbReference>
<dbReference type="GO" id="GO:0008654">
    <property type="term" value="P:phospholipid biosynthetic process"/>
    <property type="evidence" value="ECO:0007669"/>
    <property type="project" value="UniProtKB-KW"/>
</dbReference>
<dbReference type="Gene3D" id="2.60.200.40">
    <property type="match status" value="1"/>
</dbReference>
<dbReference type="Gene3D" id="3.40.50.10330">
    <property type="entry name" value="Probable inorganic polyphosphate/atp-NAD kinase, domain 1"/>
    <property type="match status" value="1"/>
</dbReference>
<dbReference type="InterPro" id="IPR017438">
    <property type="entry name" value="ATP-NAD_kinase_N"/>
</dbReference>
<dbReference type="InterPro" id="IPR005218">
    <property type="entry name" value="Diacylglycerol/lipid_kinase"/>
</dbReference>
<dbReference type="InterPro" id="IPR001206">
    <property type="entry name" value="Diacylglycerol_kinase_cat_dom"/>
</dbReference>
<dbReference type="InterPro" id="IPR050187">
    <property type="entry name" value="Lipid_Phosphate_FormReg"/>
</dbReference>
<dbReference type="InterPro" id="IPR016064">
    <property type="entry name" value="NAD/diacylglycerol_kinase_sf"/>
</dbReference>
<dbReference type="InterPro" id="IPR045540">
    <property type="entry name" value="YegS/DAGK_C"/>
</dbReference>
<dbReference type="NCBIfam" id="TIGR00147">
    <property type="entry name" value="YegS/Rv2252/BmrU family lipid kinase"/>
    <property type="match status" value="1"/>
</dbReference>
<dbReference type="PANTHER" id="PTHR12358:SF106">
    <property type="entry name" value="LIPID KINASE YEGS"/>
    <property type="match status" value="1"/>
</dbReference>
<dbReference type="PANTHER" id="PTHR12358">
    <property type="entry name" value="SPHINGOSINE KINASE"/>
    <property type="match status" value="1"/>
</dbReference>
<dbReference type="Pfam" id="PF00781">
    <property type="entry name" value="DAGK_cat"/>
    <property type="match status" value="1"/>
</dbReference>
<dbReference type="Pfam" id="PF19279">
    <property type="entry name" value="YegS_C"/>
    <property type="match status" value="1"/>
</dbReference>
<dbReference type="SMART" id="SM00046">
    <property type="entry name" value="DAGKc"/>
    <property type="match status" value="1"/>
</dbReference>
<dbReference type="SUPFAM" id="SSF111331">
    <property type="entry name" value="NAD kinase/diacylglycerol kinase-like"/>
    <property type="match status" value="1"/>
</dbReference>
<dbReference type="PROSITE" id="PS50146">
    <property type="entry name" value="DAGK"/>
    <property type="match status" value="1"/>
</dbReference>
<organism>
    <name type="scientific">Staphylococcus epidermidis (strain ATCC 35984 / DSM 28319 / BCRC 17069 / CCUG 31568 / BM 3577 / RP62A)</name>
    <dbReference type="NCBI Taxonomy" id="176279"/>
    <lineage>
        <taxon>Bacteria</taxon>
        <taxon>Bacillati</taxon>
        <taxon>Bacillota</taxon>
        <taxon>Bacilli</taxon>
        <taxon>Bacillales</taxon>
        <taxon>Staphylococcaceae</taxon>
        <taxon>Staphylococcus</taxon>
    </lineage>
</organism>
<proteinExistence type="inferred from homology"/>
<protein>
    <recommendedName>
        <fullName>Putative lipid kinase SERP0390</fullName>
        <ecNumber>2.7.1.-</ecNumber>
    </recommendedName>
</protein>
<accession>Q5HR05</accession>